<evidence type="ECO:0000255" key="1">
    <source>
        <dbReference type="HAMAP-Rule" id="MF_00362"/>
    </source>
</evidence>
<evidence type="ECO:0000305" key="2"/>
<organism>
    <name type="scientific">Vesicomyosocius okutanii subsp. Calyptogena okutanii (strain HA)</name>
    <dbReference type="NCBI Taxonomy" id="412965"/>
    <lineage>
        <taxon>Bacteria</taxon>
        <taxon>Pseudomonadati</taxon>
        <taxon>Pseudomonadota</taxon>
        <taxon>Gammaproteobacteria</taxon>
        <taxon>Candidatus Pseudothioglobaceae</taxon>
        <taxon>Candidatus Vesicomyosocius</taxon>
    </lineage>
</organism>
<name>RL10_VESOH</name>
<dbReference type="EMBL" id="AP009247">
    <property type="protein sequence ID" value="BAF61850.1"/>
    <property type="molecule type" value="Genomic_DNA"/>
</dbReference>
<dbReference type="RefSeq" id="WP_011930120.1">
    <property type="nucleotide sequence ID" value="NC_009465.1"/>
</dbReference>
<dbReference type="SMR" id="A5CW27"/>
<dbReference type="STRING" id="412965.COSY_0738"/>
<dbReference type="KEGG" id="vok:COSY_0738"/>
<dbReference type="eggNOG" id="COG0244">
    <property type="taxonomic scope" value="Bacteria"/>
</dbReference>
<dbReference type="HOGENOM" id="CLU_092227_0_1_6"/>
<dbReference type="OrthoDB" id="9808307at2"/>
<dbReference type="Proteomes" id="UP000000247">
    <property type="component" value="Chromosome"/>
</dbReference>
<dbReference type="GO" id="GO:1990904">
    <property type="term" value="C:ribonucleoprotein complex"/>
    <property type="evidence" value="ECO:0007669"/>
    <property type="project" value="UniProtKB-KW"/>
</dbReference>
<dbReference type="GO" id="GO:0005840">
    <property type="term" value="C:ribosome"/>
    <property type="evidence" value="ECO:0007669"/>
    <property type="project" value="UniProtKB-KW"/>
</dbReference>
<dbReference type="GO" id="GO:0070180">
    <property type="term" value="F:large ribosomal subunit rRNA binding"/>
    <property type="evidence" value="ECO:0007669"/>
    <property type="project" value="UniProtKB-UniRule"/>
</dbReference>
<dbReference type="GO" id="GO:0006412">
    <property type="term" value="P:translation"/>
    <property type="evidence" value="ECO:0007669"/>
    <property type="project" value="UniProtKB-UniRule"/>
</dbReference>
<dbReference type="CDD" id="cd05797">
    <property type="entry name" value="Ribosomal_L10"/>
    <property type="match status" value="1"/>
</dbReference>
<dbReference type="Gene3D" id="3.30.70.1730">
    <property type="match status" value="1"/>
</dbReference>
<dbReference type="Gene3D" id="6.10.250.290">
    <property type="match status" value="1"/>
</dbReference>
<dbReference type="HAMAP" id="MF_00362">
    <property type="entry name" value="Ribosomal_uL10"/>
    <property type="match status" value="1"/>
</dbReference>
<dbReference type="InterPro" id="IPR001790">
    <property type="entry name" value="Ribosomal_uL10"/>
</dbReference>
<dbReference type="InterPro" id="IPR043141">
    <property type="entry name" value="Ribosomal_uL10-like_sf"/>
</dbReference>
<dbReference type="InterPro" id="IPR022973">
    <property type="entry name" value="Ribosomal_uL10_bac"/>
</dbReference>
<dbReference type="InterPro" id="IPR047865">
    <property type="entry name" value="Ribosomal_uL10_bac_type"/>
</dbReference>
<dbReference type="NCBIfam" id="NF000955">
    <property type="entry name" value="PRK00099.1-1"/>
    <property type="match status" value="1"/>
</dbReference>
<dbReference type="PANTHER" id="PTHR11560">
    <property type="entry name" value="39S RIBOSOMAL PROTEIN L10, MITOCHONDRIAL"/>
    <property type="match status" value="1"/>
</dbReference>
<dbReference type="Pfam" id="PF00466">
    <property type="entry name" value="Ribosomal_L10"/>
    <property type="match status" value="1"/>
</dbReference>
<dbReference type="SUPFAM" id="SSF160369">
    <property type="entry name" value="Ribosomal protein L10-like"/>
    <property type="match status" value="1"/>
</dbReference>
<sequence length="174" mass="18777">MALNLMAKKAVVAQVNLLARVSVSIGVAEYCGLTVEQMTNLRSSAIDADVVLRVVKNSLAKRALVSTKCECVLPVLSGPVILGFSQQDLGAVARVFKNFIKENKDLVVKGLGVSGEFVESNQLKRIADLPTRDQAISIIMALMLAPVEKLARTLIEVPMKVTRVVEAVCDQKKS</sequence>
<keyword id="KW-1185">Reference proteome</keyword>
<keyword id="KW-0687">Ribonucleoprotein</keyword>
<keyword id="KW-0689">Ribosomal protein</keyword>
<keyword id="KW-0694">RNA-binding</keyword>
<keyword id="KW-0699">rRNA-binding</keyword>
<proteinExistence type="inferred from homology"/>
<reference key="1">
    <citation type="journal article" date="2007" name="Curr. Biol.">
        <title>Reduced genome of the thioautotrophic intracellular symbiont in a deep-sea clam, Calyptogena okutanii.</title>
        <authorList>
            <person name="Kuwahara H."/>
            <person name="Yoshida T."/>
            <person name="Takaki Y."/>
            <person name="Shimamura S."/>
            <person name="Nishi S."/>
            <person name="Harada M."/>
            <person name="Matsuyama K."/>
            <person name="Takishita K."/>
            <person name="Kawato M."/>
            <person name="Uematsu K."/>
            <person name="Fujiwara Y."/>
            <person name="Sato T."/>
            <person name="Kato C."/>
            <person name="Kitagawa M."/>
            <person name="Kato I."/>
            <person name="Maruyama T."/>
        </authorList>
    </citation>
    <scope>NUCLEOTIDE SEQUENCE [LARGE SCALE GENOMIC DNA]</scope>
    <source>
        <strain>HA</strain>
    </source>
</reference>
<gene>
    <name evidence="1" type="primary">rplJ</name>
    <name type="ordered locus">COSY_0738</name>
</gene>
<feature type="chain" id="PRO_1000005617" description="Large ribosomal subunit protein uL10">
    <location>
        <begin position="1"/>
        <end position="174"/>
    </location>
</feature>
<accession>A5CW27</accession>
<comment type="function">
    <text evidence="1">Forms part of the ribosomal stalk, playing a central role in the interaction of the ribosome with GTP-bound translation factors.</text>
</comment>
<comment type="subunit">
    <text evidence="1">Part of the ribosomal stalk of the 50S ribosomal subunit. The N-terminus interacts with L11 and the large rRNA to form the base of the stalk. The C-terminus forms an elongated spine to which L12 dimers bind in a sequential fashion forming a multimeric L10(L12)X complex.</text>
</comment>
<comment type="similarity">
    <text evidence="1">Belongs to the universal ribosomal protein uL10 family.</text>
</comment>
<protein>
    <recommendedName>
        <fullName evidence="1">Large ribosomal subunit protein uL10</fullName>
    </recommendedName>
    <alternativeName>
        <fullName evidence="2">50S ribosomal protein L10</fullName>
    </alternativeName>
</protein>